<accession>A0A4D6IA24</accession>
<proteinExistence type="evidence at protein level"/>
<sequence>MSITTMKGVTSESPAEALSRFQTTGLTLNNPKDLYWMTEFLKEEFYDKGNYYYPIKTVCDGELIETELFCPFEPKLSPHYIQLYNSRDERSNLYAVPPKKTDMKKYNRINCEKMGSLMAPNSNYDDTEMVSLFYSMMYYLNDQTAHLKLPEEDIQPELVDELNDHVLQYLSVFLSIFKPREPQDLERIWNFLDFYQPYFKKVDGKIILHEKYQGRTPPQIGLIKKITGYVLERFAPKKNITQVIYEVIRYIKGIKQEIKIRGDKSFTLSLKEYDEFRDQVTSSPMAHSITDLTYDDFSYKAYMNPLFIKLEDLTSEIITYFNDVCTCDRERLDDDPFNSVFILRDLHSLNYVKSCDLVVKHAHDKLSKFLEIKQTLLKESTNENEKKAIAQMIKTREDSLIGYTIHEICCVTNGYARDHKPLMKDYLEKNIFKKLKATN</sequence>
<protein>
    <recommendedName>
        <fullName evidence="4">Magnesium-dependent glutamate N-prenyltransferase</fullName>
        <ecNumber evidence="2 3">2.5.1.-</ecNumber>
    </recommendedName>
    <alternativeName>
        <fullName evidence="4">Kainic acid biosynthesis cluster protein A</fullName>
        <shortName evidence="4">DsKabA</shortName>
    </alternativeName>
</protein>
<evidence type="ECO:0000250" key="1">
    <source>
        <dbReference type="UniProtKB" id="A0A386KZ50"/>
    </source>
</evidence>
<evidence type="ECO:0000269" key="2">
    <source>
    </source>
</evidence>
<evidence type="ECO:0000269" key="3">
    <source>
    </source>
</evidence>
<evidence type="ECO:0000303" key="4">
    <source>
    </source>
</evidence>
<evidence type="ECO:0000305" key="5"/>
<gene>
    <name evidence="4" type="primary">kabA</name>
</gene>
<reference key="1">
    <citation type="journal article" date="2019" name="Angew. Chem. Int. Ed.">
        <title>Scalable biosynthesis of the seaweed neurochemical, kainic acid.</title>
        <authorList>
            <person name="Chekan J.R."/>
            <person name="McKinnie S.M.K."/>
            <person name="Moore M.L."/>
            <person name="Poplawski S.G."/>
            <person name="Michael T.P."/>
            <person name="Moore B.S."/>
        </authorList>
    </citation>
    <scope>NUCLEOTIDE SEQUENCE [GENOMIC DNA]</scope>
    <scope>FUNCTION</scope>
    <scope>CATALYTIC ACTIVITY</scope>
    <scope>PATHWAY</scope>
</reference>
<reference key="2">
    <citation type="journal article" date="1998" name="Nat. Toxins">
        <title>The activation of glutamate receptors by kainic acid and domoic acid.</title>
        <authorList>
            <person name="Hampson D.R."/>
            <person name="Manalo J.L."/>
        </authorList>
    </citation>
    <scope>REVIEW ON NEUROTOXIC ACTIVITY</scope>
</reference>
<reference key="3">
    <citation type="journal article" date="2020" name="Proc. Natl. Acad. Sci. U.S.A.">
        <title>Algal neurotoxin biosynthesis repurposes the terpene cyclase structural fold into an N-prenyltransferase.</title>
        <authorList>
            <person name="Chekan J.R."/>
            <person name="McKinnie S.M.K."/>
            <person name="Noel J.P."/>
            <person name="Moore B.S."/>
        </authorList>
    </citation>
    <scope>FUNCTION</scope>
    <scope>CATALYTIC ACTIVITY</scope>
    <scope>BIOPHYSICOCHEMICAL PROPERTIES</scope>
    <scope>MUTAGENESIS OF MET-114</scope>
</reference>
<dbReference type="EC" id="2.5.1.-" evidence="2 3"/>
<dbReference type="EMBL" id="MK312630">
    <property type="protein sequence ID" value="QCC62379.1"/>
    <property type="molecule type" value="Genomic_DNA"/>
</dbReference>
<dbReference type="SMR" id="A0A4D6IA24"/>
<dbReference type="GO" id="GO:0046872">
    <property type="term" value="F:metal ion binding"/>
    <property type="evidence" value="ECO:0007669"/>
    <property type="project" value="UniProtKB-KW"/>
</dbReference>
<dbReference type="GO" id="GO:0016740">
    <property type="term" value="F:transferase activity"/>
    <property type="evidence" value="ECO:0007669"/>
    <property type="project" value="UniProtKB-KW"/>
</dbReference>
<dbReference type="Gene3D" id="1.10.600.10">
    <property type="entry name" value="Farnesyl Diphosphate Synthase"/>
    <property type="match status" value="1"/>
</dbReference>
<dbReference type="InterPro" id="IPR008949">
    <property type="entry name" value="Isoprenoid_synthase_dom_sf"/>
</dbReference>
<dbReference type="Pfam" id="PF19086">
    <property type="entry name" value="Terpene_syn_C_2"/>
    <property type="match status" value="1"/>
</dbReference>
<dbReference type="SUPFAM" id="SSF48576">
    <property type="entry name" value="Terpenoid synthases"/>
    <property type="match status" value="1"/>
</dbReference>
<keyword id="KW-0460">Magnesium</keyword>
<keyword id="KW-0479">Metal-binding</keyword>
<keyword id="KW-0808">Transferase</keyword>
<name>KABA_DIGSM</name>
<comment type="function">
    <text evidence="2 3">Magnesium-dependent glutamate N-prenyltransferase: part of the gene cluster that mediates the biosynthesis of kainic acid (KA) and derivatives, natural products with neurochemical activity acting as ionotropic glutamate receptor (iGluR) agonists, thus being neurotoxins (PubMed:30995339). Catalyzes the conversion of L-glutamic acid (L-Glu) to prekainic acid in the presence of dimethylallyl diphosphate (DMAPP) (PubMed:30995339, PubMed:32457155). Can also use geranyl diphosphate (GPP) as substrate, thus leading to the formation of N-geranyl-L-glutamic acid (L-NGG) (PubMed:30995339, PubMed:32457155).</text>
</comment>
<comment type="catalytic activity">
    <reaction evidence="2 3">
        <text>dimethylallyl diphosphate + L-glutamate = prekainate + diphosphate</text>
        <dbReference type="Rhea" id="RHEA:67476"/>
        <dbReference type="ChEBI" id="CHEBI:29985"/>
        <dbReference type="ChEBI" id="CHEBI:33019"/>
        <dbReference type="ChEBI" id="CHEBI:57623"/>
        <dbReference type="ChEBI" id="CHEBI:170011"/>
    </reaction>
    <physiologicalReaction direction="left-to-right" evidence="2 3">
        <dbReference type="Rhea" id="RHEA:67477"/>
    </physiologicalReaction>
</comment>
<comment type="cofactor">
    <cofactor evidence="1">
        <name>Mg(2+)</name>
        <dbReference type="ChEBI" id="CHEBI:18420"/>
    </cofactor>
</comment>
<comment type="biophysicochemical properties">
    <kinetics>
        <KM evidence="3">89 uM for geranyl diphosphate</KM>
        <KM evidence="3">1.1 uM for dimethylallyl diphosphate</KM>
        <text evidence="3">kcat is 0.29 min(-1) with geranyl diphosphate as substrate (PubMed:32457155). kcat is 1.3 min(-1) with dimethylallyl diphosphate as substrate (PubMed:32457155).</text>
    </kinetics>
</comment>
<comment type="pathway">
    <text evidence="2">Secondary metabolite biosynthesis.</text>
</comment>
<comment type="similarity">
    <text evidence="5">Belongs to the terpene synthase family.</text>
</comment>
<organism>
    <name type="scientific">Digenea simplex</name>
    <name type="common">Marine red alga</name>
    <name type="synonym">Conferva simplex</name>
    <dbReference type="NCBI Taxonomy" id="945030"/>
    <lineage>
        <taxon>Eukaryota</taxon>
        <taxon>Rhodophyta</taxon>
        <taxon>Florideophyceae</taxon>
        <taxon>Rhodymeniophycidae</taxon>
        <taxon>Ceramiales</taxon>
        <taxon>Rhodomelaceae</taxon>
        <taxon>Polysiphonioideae</taxon>
        <taxon>Digenea</taxon>
    </lineage>
</organism>
<feature type="chain" id="PRO_0000454271" description="Magnesium-dependent glutamate N-prenyltransferase">
    <location>
        <begin position="1"/>
        <end position="439"/>
    </location>
</feature>
<feature type="binding site" evidence="1">
    <location>
        <position position="322"/>
    </location>
    <ligand>
        <name>Mg(2+)</name>
        <dbReference type="ChEBI" id="CHEBI:18420"/>
        <label>1</label>
    </ligand>
</feature>
<feature type="binding site" evidence="1">
    <location>
        <position position="326"/>
    </location>
    <ligand>
        <name>Mg(2+)</name>
        <dbReference type="ChEBI" id="CHEBI:18420"/>
        <label>1</label>
    </ligand>
</feature>
<feature type="binding site" evidence="1">
    <location>
        <position position="330"/>
    </location>
    <ligand>
        <name>Mg(2+)</name>
        <dbReference type="ChEBI" id="CHEBI:18420"/>
        <label>1</label>
    </ligand>
</feature>
<feature type="binding site" evidence="1">
    <location>
        <position position="330"/>
    </location>
    <ligand>
        <name>Mg(2+)</name>
        <dbReference type="ChEBI" id="CHEBI:18420"/>
        <label>2</label>
    </ligand>
</feature>
<feature type="binding site" evidence="1">
    <location>
        <position position="337"/>
    </location>
    <ligand>
        <name>Mg(2+)</name>
        <dbReference type="ChEBI" id="CHEBI:18420"/>
        <label>2</label>
    </ligand>
</feature>
<feature type="mutagenesis site" description="Increased affinity for geranyl diphosphate (GPP) leading to an enhanced catalytic efficiency with GPP as substrate, but reduced activity with dimethylallyl diphosphate (DMAPP)." evidence="3">
    <original>M</original>
    <variation>T</variation>
    <location>
        <position position="114"/>
    </location>
</feature>